<accession>A3PJQ3</accession>
<proteinExistence type="inferred from homology"/>
<sequence length="225" mass="23026">MTTAAIIVAAGRGTRAGGDLPKQWQPLAGRPVLAHTLAAFRAAAGVSRTLLVIHPDDRARAEALPGVAEGKVELVEGGASRDASVRNALEALAGAGIERVLIHDGARPLVAPGLIARTLAALETAPGAAPAVPVSDALWRGEGGRVVGTQDRTGLFRAQTPQAFRYEAILAAHRAHPGGAADDVEVARAAGLEVAIVEGCEDNLKVTYPGDFARAERLLALAAGL</sequence>
<name>ISPD_CERS1</name>
<gene>
    <name evidence="1" type="primary">ispD</name>
    <name type="ordered locus">Rsph17029_1459</name>
</gene>
<feature type="chain" id="PRO_1000022943" description="2-C-methyl-D-erythritol 4-phosphate cytidylyltransferase">
    <location>
        <begin position="1"/>
        <end position="225"/>
    </location>
</feature>
<feature type="site" description="Transition state stabilizer" evidence="1">
    <location>
        <position position="15"/>
    </location>
</feature>
<feature type="site" description="Transition state stabilizer" evidence="1">
    <location>
        <position position="22"/>
    </location>
</feature>
<feature type="site" description="Positions MEP for the nucleophilic attack" evidence="1">
    <location>
        <position position="152"/>
    </location>
</feature>
<feature type="site" description="Positions MEP for the nucleophilic attack" evidence="1">
    <location>
        <position position="205"/>
    </location>
</feature>
<organism>
    <name type="scientific">Cereibacter sphaeroides (strain ATCC 17029 / ATH 2.4.9)</name>
    <name type="common">Rhodobacter sphaeroides</name>
    <dbReference type="NCBI Taxonomy" id="349101"/>
    <lineage>
        <taxon>Bacteria</taxon>
        <taxon>Pseudomonadati</taxon>
        <taxon>Pseudomonadota</taxon>
        <taxon>Alphaproteobacteria</taxon>
        <taxon>Rhodobacterales</taxon>
        <taxon>Paracoccaceae</taxon>
        <taxon>Cereibacter</taxon>
    </lineage>
</organism>
<keyword id="KW-0414">Isoprene biosynthesis</keyword>
<keyword id="KW-0548">Nucleotidyltransferase</keyword>
<keyword id="KW-0808">Transferase</keyword>
<comment type="function">
    <text evidence="1">Catalyzes the formation of 4-diphosphocytidyl-2-C-methyl-D-erythritol from CTP and 2-C-methyl-D-erythritol 4-phosphate (MEP).</text>
</comment>
<comment type="catalytic activity">
    <reaction evidence="1">
        <text>2-C-methyl-D-erythritol 4-phosphate + CTP + H(+) = 4-CDP-2-C-methyl-D-erythritol + diphosphate</text>
        <dbReference type="Rhea" id="RHEA:13429"/>
        <dbReference type="ChEBI" id="CHEBI:15378"/>
        <dbReference type="ChEBI" id="CHEBI:33019"/>
        <dbReference type="ChEBI" id="CHEBI:37563"/>
        <dbReference type="ChEBI" id="CHEBI:57823"/>
        <dbReference type="ChEBI" id="CHEBI:58262"/>
        <dbReference type="EC" id="2.7.7.60"/>
    </reaction>
</comment>
<comment type="pathway">
    <text evidence="1">Isoprenoid biosynthesis; isopentenyl diphosphate biosynthesis via DXP pathway; isopentenyl diphosphate from 1-deoxy-D-xylulose 5-phosphate: step 2/6.</text>
</comment>
<comment type="similarity">
    <text evidence="1">Belongs to the IspD/TarI cytidylyltransferase family. IspD subfamily.</text>
</comment>
<reference key="1">
    <citation type="submission" date="2007-02" db="EMBL/GenBank/DDBJ databases">
        <title>Complete sequence of chromosome 1 of Rhodobacter sphaeroides ATCC 17029.</title>
        <authorList>
            <person name="Copeland A."/>
            <person name="Lucas S."/>
            <person name="Lapidus A."/>
            <person name="Barry K."/>
            <person name="Detter J.C."/>
            <person name="Glavina del Rio T."/>
            <person name="Hammon N."/>
            <person name="Israni S."/>
            <person name="Dalin E."/>
            <person name="Tice H."/>
            <person name="Pitluck S."/>
            <person name="Kiss H."/>
            <person name="Brettin T."/>
            <person name="Bruce D."/>
            <person name="Han C."/>
            <person name="Tapia R."/>
            <person name="Gilna P."/>
            <person name="Schmutz J."/>
            <person name="Larimer F."/>
            <person name="Land M."/>
            <person name="Hauser L."/>
            <person name="Kyrpides N."/>
            <person name="Mikhailova N."/>
            <person name="Richardson P."/>
            <person name="Mackenzie C."/>
            <person name="Choudhary M."/>
            <person name="Donohue T.J."/>
            <person name="Kaplan S."/>
        </authorList>
    </citation>
    <scope>NUCLEOTIDE SEQUENCE [LARGE SCALE GENOMIC DNA]</scope>
    <source>
        <strain>ATCC 17029 / ATH 2.4.9</strain>
    </source>
</reference>
<protein>
    <recommendedName>
        <fullName evidence="1">2-C-methyl-D-erythritol 4-phosphate cytidylyltransferase</fullName>
        <ecNumber evidence="1">2.7.7.60</ecNumber>
    </recommendedName>
    <alternativeName>
        <fullName evidence="1">4-diphosphocytidyl-2C-methyl-D-erythritol synthase</fullName>
    </alternativeName>
    <alternativeName>
        <fullName evidence="1">MEP cytidylyltransferase</fullName>
        <shortName evidence="1">MCT</shortName>
    </alternativeName>
</protein>
<dbReference type="EC" id="2.7.7.60" evidence="1"/>
<dbReference type="EMBL" id="CP000577">
    <property type="protein sequence ID" value="ABN76569.1"/>
    <property type="molecule type" value="Genomic_DNA"/>
</dbReference>
<dbReference type="RefSeq" id="WP_011841027.1">
    <property type="nucleotide sequence ID" value="NC_009049.1"/>
</dbReference>
<dbReference type="SMR" id="A3PJQ3"/>
<dbReference type="KEGG" id="rsh:Rsph17029_1459"/>
<dbReference type="HOGENOM" id="CLU_061281_3_0_5"/>
<dbReference type="UniPathway" id="UPA00056">
    <property type="reaction ID" value="UER00093"/>
</dbReference>
<dbReference type="GO" id="GO:0050518">
    <property type="term" value="F:2-C-methyl-D-erythritol 4-phosphate cytidylyltransferase activity"/>
    <property type="evidence" value="ECO:0007669"/>
    <property type="project" value="UniProtKB-UniRule"/>
</dbReference>
<dbReference type="GO" id="GO:0019288">
    <property type="term" value="P:isopentenyl diphosphate biosynthetic process, methylerythritol 4-phosphate pathway"/>
    <property type="evidence" value="ECO:0007669"/>
    <property type="project" value="UniProtKB-UniRule"/>
</dbReference>
<dbReference type="CDD" id="cd02516">
    <property type="entry name" value="CDP-ME_synthetase"/>
    <property type="match status" value="1"/>
</dbReference>
<dbReference type="FunFam" id="3.90.550.10:FF:000003">
    <property type="entry name" value="2-C-methyl-D-erythritol 4-phosphate cytidylyltransferase"/>
    <property type="match status" value="1"/>
</dbReference>
<dbReference type="Gene3D" id="3.90.550.10">
    <property type="entry name" value="Spore Coat Polysaccharide Biosynthesis Protein SpsA, Chain A"/>
    <property type="match status" value="1"/>
</dbReference>
<dbReference type="HAMAP" id="MF_00108">
    <property type="entry name" value="IspD"/>
    <property type="match status" value="1"/>
</dbReference>
<dbReference type="InterPro" id="IPR001228">
    <property type="entry name" value="IspD"/>
</dbReference>
<dbReference type="InterPro" id="IPR034683">
    <property type="entry name" value="IspD/TarI"/>
</dbReference>
<dbReference type="InterPro" id="IPR050088">
    <property type="entry name" value="IspD/TarI_cytidylyltransf_bact"/>
</dbReference>
<dbReference type="InterPro" id="IPR018294">
    <property type="entry name" value="ISPD_synthase_CS"/>
</dbReference>
<dbReference type="InterPro" id="IPR029044">
    <property type="entry name" value="Nucleotide-diphossugar_trans"/>
</dbReference>
<dbReference type="NCBIfam" id="TIGR00453">
    <property type="entry name" value="ispD"/>
    <property type="match status" value="1"/>
</dbReference>
<dbReference type="PANTHER" id="PTHR32125">
    <property type="entry name" value="2-C-METHYL-D-ERYTHRITOL 4-PHOSPHATE CYTIDYLYLTRANSFERASE, CHLOROPLASTIC"/>
    <property type="match status" value="1"/>
</dbReference>
<dbReference type="PANTHER" id="PTHR32125:SF4">
    <property type="entry name" value="2-C-METHYL-D-ERYTHRITOL 4-PHOSPHATE CYTIDYLYLTRANSFERASE, CHLOROPLASTIC"/>
    <property type="match status" value="1"/>
</dbReference>
<dbReference type="Pfam" id="PF01128">
    <property type="entry name" value="IspD"/>
    <property type="match status" value="1"/>
</dbReference>
<dbReference type="SUPFAM" id="SSF53448">
    <property type="entry name" value="Nucleotide-diphospho-sugar transferases"/>
    <property type="match status" value="1"/>
</dbReference>
<dbReference type="PROSITE" id="PS01295">
    <property type="entry name" value="ISPD"/>
    <property type="match status" value="1"/>
</dbReference>
<evidence type="ECO:0000255" key="1">
    <source>
        <dbReference type="HAMAP-Rule" id="MF_00108"/>
    </source>
</evidence>